<name>SOMA_CAPHI</name>
<keyword id="KW-1015">Disulfide bond</keyword>
<keyword id="KW-0372">Hormone</keyword>
<keyword id="KW-0479">Metal-binding</keyword>
<keyword id="KW-0597">Phosphoprotein</keyword>
<keyword id="KW-1185">Reference proteome</keyword>
<keyword id="KW-0964">Secreted</keyword>
<keyword id="KW-0732">Signal</keyword>
<keyword id="KW-0862">Zinc</keyword>
<comment type="function">
    <text>Plays an important role in growth control. Its major role in stimulating body growth is to stimulate the liver and other tissues to secrete IGF1. It stimulates both the differentiation and proliferation of myoblasts. It also stimulates amino acid uptake and protein synthesis in muscle and other tissues.</text>
</comment>
<comment type="subcellular location">
    <subcellularLocation>
        <location>Secreted</location>
    </subcellularLocation>
</comment>
<comment type="similarity">
    <text evidence="3">Belongs to the somatotropin/prolactin family.</text>
</comment>
<organism>
    <name type="scientific">Capra hircus</name>
    <name type="common">Goat</name>
    <dbReference type="NCBI Taxonomy" id="9925"/>
    <lineage>
        <taxon>Eukaryota</taxon>
        <taxon>Metazoa</taxon>
        <taxon>Chordata</taxon>
        <taxon>Craniata</taxon>
        <taxon>Vertebrata</taxon>
        <taxon>Euteleostomi</taxon>
        <taxon>Mammalia</taxon>
        <taxon>Eutheria</taxon>
        <taxon>Laurasiatheria</taxon>
        <taxon>Artiodactyla</taxon>
        <taxon>Ruminantia</taxon>
        <taxon>Pecora</taxon>
        <taxon>Bovidae</taxon>
        <taxon>Caprinae</taxon>
        <taxon>Capra</taxon>
    </lineage>
</organism>
<gene>
    <name type="primary">GH1</name>
</gene>
<evidence type="ECO:0000250" key="1"/>
<evidence type="ECO:0000250" key="2">
    <source>
        <dbReference type="UniProtKB" id="P01241"/>
    </source>
</evidence>
<evidence type="ECO:0000305" key="3"/>
<reference key="1">
    <citation type="journal article" date="1988" name="FEBS Lett.">
        <title>Cloning and sequencing of cDNA that encodes goat growth hormone.</title>
        <authorList>
            <person name="Yamano Y."/>
            <person name="Oyabayashi K."/>
            <person name="Okuno M."/>
            <person name="Yato M."/>
            <person name="Kioka N."/>
            <person name="Manabe E."/>
            <person name="Hashi H."/>
            <person name="Sakai H."/>
            <person name="Komano T."/>
            <person name="Utsumi K."/>
            <person name="Iritani A."/>
        </authorList>
    </citation>
    <scope>NUCLEOTIDE SEQUENCE [MRNA]</scope>
    <source>
        <strain>Saanen</strain>
    </source>
</reference>
<reference key="2">
    <citation type="journal article" date="1988" name="Nucleic Acids Res.">
        <title>Nucleotide sequence of the growth hormone gene cDNA from goat Capra hircus L. (Tokara).</title>
        <authorList>
            <person name="Yato M."/>
            <person name="Yamano Y."/>
            <person name="Oyabayashi K."/>
            <person name="Okuno M."/>
            <person name="Kioka N."/>
            <person name="Manabe E."/>
            <person name="Hashi H."/>
            <person name="Sakai H."/>
            <person name="Komano T."/>
            <person name="Utsumi K."/>
            <person name="Iritani A."/>
        </authorList>
    </citation>
    <scope>NUCLEOTIDE SEQUENCE [MRNA]</scope>
</reference>
<reference key="3">
    <citation type="journal article" date="1989" name="Agric. Biol. Chem.">
        <title>Cloning and sequencing of goat growth hormone gene.</title>
        <authorList>
            <person name="Kioka N."/>
            <person name="Manabe E."/>
            <person name="Abe M."/>
            <person name="Hashi H."/>
            <person name="Yato M."/>
            <person name="Okuno M."/>
            <person name="Yamano Y."/>
            <person name="Sakai H."/>
            <person name="Komano T."/>
            <person name="Utsumi K."/>
            <person name="Iritani A."/>
        </authorList>
    </citation>
    <scope>NUCLEOTIDE SEQUENCE [GENOMIC DNA]</scope>
</reference>
<proteinExistence type="evidence at transcript level"/>
<sequence length="217" mass="24631">MMAAGPRTSLLLAFTLLCLPWTQVVGAFPAMSLSGLFANAVLRAQHLHQLAADTFKEFERTYIPEGQRYSIQNTQVAFCFSETIPAPTGKNEAQQKSDLELLRISLLLIQSWLGPLQFLSRVFTNSLVFGTSDRVYEKLKDLEEGILALMRELEDVTPRAGQILKQTYDKFDTNMRSDDALLKNYGLLSCFRKDLHKTETYLRVMKCRRFGEASCAF</sequence>
<protein>
    <recommendedName>
        <fullName>Somatotropin</fullName>
    </recommendedName>
    <alternativeName>
        <fullName>Growth hormone</fullName>
    </alternativeName>
</protein>
<feature type="signal peptide" evidence="1">
    <location>
        <begin position="1"/>
        <end position="27"/>
    </location>
</feature>
<feature type="chain" id="PRO_0000032979" description="Somatotropin">
    <location>
        <begin position="28"/>
        <end position="217"/>
    </location>
</feature>
<feature type="binding site" evidence="1">
    <location>
        <position position="46"/>
    </location>
    <ligand>
        <name>Zn(2+)</name>
        <dbReference type="ChEBI" id="CHEBI:29105"/>
    </ligand>
</feature>
<feature type="binding site" evidence="1">
    <location>
        <position position="199"/>
    </location>
    <ligand>
        <name>Zn(2+)</name>
        <dbReference type="ChEBI" id="CHEBI:29105"/>
    </ligand>
</feature>
<feature type="modified residue" description="Phosphoserine" evidence="2">
    <location>
        <position position="132"/>
    </location>
</feature>
<feature type="disulfide bond" evidence="1">
    <location>
        <begin position="79"/>
        <end position="190"/>
    </location>
</feature>
<feature type="disulfide bond" evidence="1">
    <location>
        <begin position="207"/>
        <end position="215"/>
    </location>
</feature>
<accession>P67931</accession>
<accession>P01247</accession>
<accession>P07289</accession>
<accession>Q29404</accession>
<dbReference type="EMBL" id="Y00767">
    <property type="protein sequence ID" value="CAA68736.1"/>
    <property type="molecule type" value="mRNA"/>
</dbReference>
<dbReference type="EMBL" id="X07035">
    <property type="protein sequence ID" value="CAA30083.1"/>
    <property type="molecule type" value="mRNA"/>
</dbReference>
<dbReference type="EMBL" id="D00476">
    <property type="protein sequence ID" value="BAA00368.1"/>
    <property type="molecule type" value="Genomic_DNA"/>
</dbReference>
<dbReference type="PIR" id="S00321">
    <property type="entry name" value="STGT"/>
</dbReference>
<dbReference type="RefSeq" id="NP_001272515.1">
    <property type="nucleotide sequence ID" value="NM_001285586.1"/>
</dbReference>
<dbReference type="BMRB" id="P67931"/>
<dbReference type="SMR" id="P67931"/>
<dbReference type="STRING" id="9925.ENSCHIP00000008280"/>
<dbReference type="Ensembl" id="ENSCHIT00000016039.1">
    <property type="protein sequence ID" value="ENSCHIP00000008280.1"/>
    <property type="gene ID" value="ENSCHIG00000011515.1"/>
</dbReference>
<dbReference type="Ensembl" id="ENSCHIT00020056246">
    <property type="protein sequence ID" value="ENSCHIP00020043134"/>
    <property type="gene ID" value="ENSCHIG00020027144"/>
</dbReference>
<dbReference type="GeneID" id="100861230"/>
<dbReference type="KEGG" id="chx:100861230"/>
<dbReference type="CTD" id="2688"/>
<dbReference type="GeneTree" id="ENSGT00950000182818"/>
<dbReference type="OrthoDB" id="9925773at2759"/>
<dbReference type="Proteomes" id="UP000291000">
    <property type="component" value="Chromosome 19"/>
</dbReference>
<dbReference type="Proteomes" id="UP000694566">
    <property type="component" value="Unplaced"/>
</dbReference>
<dbReference type="Bgee" id="ENSCHIG00000011515">
    <property type="expression patterns" value="Expressed in ovary and 2 other cell types or tissues"/>
</dbReference>
<dbReference type="GO" id="GO:0005615">
    <property type="term" value="C:extracellular space"/>
    <property type="evidence" value="ECO:0000250"/>
    <property type="project" value="AgBase"/>
</dbReference>
<dbReference type="GO" id="GO:0008083">
    <property type="term" value="F:growth factor activity"/>
    <property type="evidence" value="ECO:0007669"/>
    <property type="project" value="TreeGrafter"/>
</dbReference>
<dbReference type="GO" id="GO:0005131">
    <property type="term" value="F:growth hormone receptor binding"/>
    <property type="evidence" value="ECO:0007669"/>
    <property type="project" value="InterPro"/>
</dbReference>
<dbReference type="GO" id="GO:0005179">
    <property type="term" value="F:hormone activity"/>
    <property type="evidence" value="ECO:0007669"/>
    <property type="project" value="UniProtKB-KW"/>
</dbReference>
<dbReference type="GO" id="GO:0046872">
    <property type="term" value="F:metal ion binding"/>
    <property type="evidence" value="ECO:0007669"/>
    <property type="project" value="UniProtKB-KW"/>
</dbReference>
<dbReference type="GO" id="GO:0048513">
    <property type="term" value="P:animal organ development"/>
    <property type="evidence" value="ECO:0007669"/>
    <property type="project" value="TreeGrafter"/>
</dbReference>
<dbReference type="GO" id="GO:0060396">
    <property type="term" value="P:growth hormone receptor signaling pathway"/>
    <property type="evidence" value="ECO:0007669"/>
    <property type="project" value="TreeGrafter"/>
</dbReference>
<dbReference type="GO" id="GO:0030073">
    <property type="term" value="P:insulin secretion"/>
    <property type="evidence" value="ECO:0000250"/>
    <property type="project" value="AgBase"/>
</dbReference>
<dbReference type="GO" id="GO:0045927">
    <property type="term" value="P:positive regulation of growth"/>
    <property type="evidence" value="ECO:0007669"/>
    <property type="project" value="TreeGrafter"/>
</dbReference>
<dbReference type="GO" id="GO:0046427">
    <property type="term" value="P:positive regulation of receptor signaling pathway via JAK-STAT"/>
    <property type="evidence" value="ECO:0007669"/>
    <property type="project" value="TreeGrafter"/>
</dbReference>
<dbReference type="GO" id="GO:0031667">
    <property type="term" value="P:response to nutrient levels"/>
    <property type="evidence" value="ECO:0007669"/>
    <property type="project" value="TreeGrafter"/>
</dbReference>
<dbReference type="CDD" id="cd10285">
    <property type="entry name" value="somatotropin_like"/>
    <property type="match status" value="1"/>
</dbReference>
<dbReference type="FunFam" id="1.20.1250.10:FF:000002">
    <property type="entry name" value="Growth hormone"/>
    <property type="match status" value="1"/>
</dbReference>
<dbReference type="Gene3D" id="1.20.1250.10">
    <property type="match status" value="1"/>
</dbReference>
<dbReference type="InterPro" id="IPR009079">
    <property type="entry name" value="4_helix_cytokine-like_core"/>
</dbReference>
<dbReference type="InterPro" id="IPR034975">
    <property type="entry name" value="Somatotropin"/>
</dbReference>
<dbReference type="InterPro" id="IPR001400">
    <property type="entry name" value="Somatotropin/Prolactin"/>
</dbReference>
<dbReference type="InterPro" id="IPR018116">
    <property type="entry name" value="Somatotropin_CS"/>
</dbReference>
<dbReference type="PANTHER" id="PTHR11417:SF2">
    <property type="entry name" value="SOMATOTROPIN"/>
    <property type="match status" value="1"/>
</dbReference>
<dbReference type="PANTHER" id="PTHR11417">
    <property type="entry name" value="SOMATOTROPIN,PROLACTIN"/>
    <property type="match status" value="1"/>
</dbReference>
<dbReference type="Pfam" id="PF00103">
    <property type="entry name" value="Hormone_1"/>
    <property type="match status" value="1"/>
</dbReference>
<dbReference type="PRINTS" id="PR00836">
    <property type="entry name" value="SOMATOTROPIN"/>
</dbReference>
<dbReference type="SUPFAM" id="SSF47266">
    <property type="entry name" value="4-helical cytokines"/>
    <property type="match status" value="1"/>
</dbReference>
<dbReference type="PROSITE" id="PS00266">
    <property type="entry name" value="SOMATOTROPIN_1"/>
    <property type="match status" value="1"/>
</dbReference>
<dbReference type="PROSITE" id="PS00338">
    <property type="entry name" value="SOMATOTROPIN_2"/>
    <property type="match status" value="1"/>
</dbReference>